<comment type="function">
    <text evidence="1">Involved in protein precursor import into chloroplasts. May be part of an intermediate translocation complex acting as a protein-conducting channel at the inner envelope.</text>
</comment>
<comment type="subunit">
    <text evidence="1">Part of the Tic complex.</text>
</comment>
<comment type="subcellular location">
    <subcellularLocation>
        <location evidence="1">Plastid</location>
        <location evidence="1">Chloroplast inner membrane</location>
        <topology evidence="2">Multi-pass membrane protein</topology>
    </subcellularLocation>
</comment>
<comment type="miscellaneous">
    <text>There is a partial copy of the N-terminus (positions 1-343) of ycf1 in the inverted repeat (BAF50598).</text>
</comment>
<comment type="similarity">
    <text evidence="4">Belongs to the TIC214 family.</text>
</comment>
<keyword id="KW-0150">Chloroplast</keyword>
<keyword id="KW-0472">Membrane</keyword>
<keyword id="KW-0934">Plastid</keyword>
<keyword id="KW-1001">Plastid inner membrane</keyword>
<keyword id="KW-0653">Protein transport</keyword>
<keyword id="KW-0812">Transmembrane</keyword>
<keyword id="KW-1133">Transmembrane helix</keyword>
<keyword id="KW-0813">Transport</keyword>
<protein>
    <recommendedName>
        <fullName evidence="1">Protein TIC 214</fullName>
    </recommendedName>
    <alternativeName>
        <fullName evidence="1">Translocon at the inner envelope membrane of chloroplasts 214</fullName>
        <shortName evidence="1">AtTIC214</shortName>
    </alternativeName>
</protein>
<dbReference type="EMBL" id="AP009375">
    <property type="protein sequence ID" value="BAF50610.1"/>
    <property type="molecule type" value="Genomic_DNA"/>
</dbReference>
<dbReference type="EMBL" id="AP009375">
    <property type="protein sequence ID" value="BAF50598.1"/>
    <property type="molecule type" value="Genomic_DNA"/>
</dbReference>
<dbReference type="GO" id="GO:0009706">
    <property type="term" value="C:chloroplast inner membrane"/>
    <property type="evidence" value="ECO:0007669"/>
    <property type="project" value="UniProtKB-SubCell"/>
</dbReference>
<dbReference type="GO" id="GO:0015031">
    <property type="term" value="P:protein transport"/>
    <property type="evidence" value="ECO:0007669"/>
    <property type="project" value="UniProtKB-KW"/>
</dbReference>
<dbReference type="InterPro" id="IPR008896">
    <property type="entry name" value="TIC214"/>
</dbReference>
<dbReference type="PANTHER" id="PTHR33163:SF40">
    <property type="entry name" value="PROTEIN TIC 214"/>
    <property type="match status" value="1"/>
</dbReference>
<dbReference type="PANTHER" id="PTHR33163">
    <property type="entry name" value="PROTEIN TIC 214-RELATED"/>
    <property type="match status" value="1"/>
</dbReference>
<dbReference type="Pfam" id="PF05758">
    <property type="entry name" value="Ycf1"/>
    <property type="match status" value="1"/>
</dbReference>
<gene>
    <name evidence="1" type="primary">TIC214</name>
    <name type="synonym">ycf1-A</name>
</gene>
<gene>
    <name evidence="1" type="primary">TIC214</name>
    <name type="synonym">ycf1-B</name>
</gene>
<feature type="chain" id="PRO_0000326580" description="Protein TIC 214">
    <location>
        <begin position="1"/>
        <end position="1775"/>
    </location>
</feature>
<feature type="transmembrane region" description="Helical" evidence="2">
    <location>
        <begin position="19"/>
        <end position="39"/>
    </location>
</feature>
<feature type="transmembrane region" description="Helical" evidence="2">
    <location>
        <begin position="68"/>
        <end position="88"/>
    </location>
</feature>
<feature type="transmembrane region" description="Helical" evidence="2">
    <location>
        <begin position="91"/>
        <end position="111"/>
    </location>
</feature>
<feature type="transmembrane region" description="Helical" evidence="2">
    <location>
        <begin position="133"/>
        <end position="153"/>
    </location>
</feature>
<feature type="transmembrane region" description="Helical" evidence="2">
    <location>
        <begin position="176"/>
        <end position="196"/>
    </location>
</feature>
<feature type="transmembrane region" description="Helical" evidence="2">
    <location>
        <begin position="227"/>
        <end position="247"/>
    </location>
</feature>
<feature type="region of interest" description="Disordered" evidence="3">
    <location>
        <begin position="1491"/>
        <end position="1512"/>
    </location>
</feature>
<geneLocation type="chloroplast"/>
<reference key="1">
    <citation type="submission" date="2007-03" db="EMBL/GenBank/DDBJ databases">
        <title>Sequencing analysis of Lobularia maritima chloroplast DNA.</title>
        <authorList>
            <person name="Hosouchi T."/>
            <person name="Tsuruoka H."/>
            <person name="Kotani H."/>
        </authorList>
    </citation>
    <scope>NUCLEOTIDE SEQUENCE [LARGE SCALE GENOMIC DNA]</scope>
</reference>
<organism>
    <name type="scientific">Lobularia maritima</name>
    <name type="common">Sweet alyssum</name>
    <name type="synonym">Alyssum maritimum</name>
    <dbReference type="NCBI Taxonomy" id="226051"/>
    <lineage>
        <taxon>Eukaryota</taxon>
        <taxon>Viridiplantae</taxon>
        <taxon>Streptophyta</taxon>
        <taxon>Embryophyta</taxon>
        <taxon>Tracheophyta</taxon>
        <taxon>Spermatophyta</taxon>
        <taxon>Magnoliopsida</taxon>
        <taxon>eudicotyledons</taxon>
        <taxon>Gunneridae</taxon>
        <taxon>Pentapetalae</taxon>
        <taxon>rosids</taxon>
        <taxon>malvids</taxon>
        <taxon>Brassicales</taxon>
        <taxon>Brassicaceae</taxon>
        <taxon>Anastaticeae</taxon>
        <taxon>Lobularia</taxon>
    </lineage>
</organism>
<proteinExistence type="inferred from homology"/>
<accession>A4QLQ5</accession>
<accession>A4QLP3</accession>
<sequence>MMVFQSFILGNLVSLCMKIINSVVVVGLYYGFLTTFSIGPSYLFLLRARVMDEGEEGTEKKVSATTGFIAGQLMMFISIYYAPLHLALGRPHTITVLALPYLLFHFFWNNHKHFFDYGSTTRNEMRNLRIQCVFLNNLIFQLFNHFILPSSMLARLVNIYMFRCNNKMLFVTSSFVGWLIGHILFMKWVGLVLVWIQQNNSIRSNVLIRSNKYKFLVSELRNSMARIFSILLFITCVYYLGRIPSPIFTKKLKGTSERGGTKQDQEVSTEEAPFPSLFSEEREDLDKIDEMEQIRVNGKEKINKDDEFHVRTYYNSKTVSENRDGNKENSNLEFFKIKKKEDCFLGFAKPFVTLVFDYKRWNRPNRYIKNDKIEHTVRNEMSQYFFYTCQNDGKEQISFTYPANLSTFFEMMQKKIPPFTREKAPSDQVFTCWSLINEEKKENLQNEFFNRIETLDKEWSVENILEKTTRFCHNETKTEYLPKIYDPFLHGISRGRIKKLPPFQIITETYIKNNIGGSWINKIHGILLKINSRKFEQTLEKFNRKSLSIEEKLSCFSEPQEEQNNSEEEIKIFKFLFNVVITDNNEQTFIKNLIYFDEINKKVPRWSYKLISDLEEMEAEDEQSILAEPGIRSRKAKRIVVFTEKETHNETFKENQSSDEKEEISFIRFSQQPDFRREIIKGSMRSQRRKTVIWEFFQAKAHSPFFFDRIDKLFFFSFDSFSFDIWGLKKKILRNFMWKNKTIYKTKAEQSKIEEKKRLQIAETWDNVRFAQIIRSSVLVTQSILRKNIILPLLIIIKNSIRVLLFQIPEWSEDLKDLKREMHVKCTYNGVQLSEKEFPRKWLTDGIQIKIIFPFYLKPWHNSKFQSSQKAQRKKAKDTEKKNDFCFLTVWGRETELPFGSAKKKPSFFEPIYKELKKRIKKFKTKPFLVLRIFKEREKFFLKVAKEMKNWIIKNFLFLKGKIKNLSKRNIIPVFGPREIYEVNETKNDSIMSNQMIENLSVQKKSMEWTNSLLSENKLKNLIDRIKTIRNQTEEISKEKENLTNSCNKPRYDSKIIESSKKSWQTLKRKNTRLIRKSFFFIKFCIEQLSIAIFLGIINIPRITTQLFFESTKTILDKYIYKNEENGKKINKKKTTIYFISTIKNLLSKKKKISYDLCSLSQAYVFYKLSKMQVSNVSKLKAVLEYKICITSFFVKNKIKDFFQEQGIFDYELKDKTFVNSEVNQWKNWLRSHSQYNLPQIAWARLGTQKWKNKINQDSIVLNRSLTKEDSYEKKIFDNYKKQNFFEADSLLNPKHNVKKDYIYNLFCYKSINSTEKNLDMAIGIALDNYLVSCFLEKYNIRGRRKIGHRKYLDWRMLNFWFRKNVNSEPWVDTKSKKKYIKTQVQNYQRIEKITKTGVANEKNFFFDWMGMNEEIINNRVTNLEFFFFPEFLLFSSTYKMKPWVIPIKLLLFNFNEKKNINKKITPNKKGFIPSNAKKFLEFFNLNKEEKESAGQGERESDNEKKKNLESALSKQEKNIEENYAELKIKKHKTKKQHKSNTEVEIDSFMGRDSRFQMRWNSFFNKKIITTLKVYCFLVRLKNPNEIILSSIERGEINPDILLISKTLPFSQLLKKGMWVFEPVRLSLKNDGQLIIYRTIGISLVHKKKNKISKRYKKKSYIDKKNNCDFFVPENILSPKRRREFRILICFNLKKKNARDRNSRFDKNIPNLTTVLHKKKNLDKDKNNLIKLKSFLWPNFRLEDLACMNRYWFNTTNGNHFGMIRIHMYTRFQIH</sequence>
<name>TI214_LOBMA</name>
<evidence type="ECO:0000250" key="1">
    <source>
        <dbReference type="UniProtKB" id="P56785"/>
    </source>
</evidence>
<evidence type="ECO:0000255" key="2"/>
<evidence type="ECO:0000256" key="3">
    <source>
        <dbReference type="SAM" id="MobiDB-lite"/>
    </source>
</evidence>
<evidence type="ECO:0000305" key="4"/>